<organism>
    <name type="scientific">Streptococcus agalactiae serotype III (strain NEM316)</name>
    <dbReference type="NCBI Taxonomy" id="211110"/>
    <lineage>
        <taxon>Bacteria</taxon>
        <taxon>Bacillati</taxon>
        <taxon>Bacillota</taxon>
        <taxon>Bacilli</taxon>
        <taxon>Lactobacillales</taxon>
        <taxon>Streptococcaceae</taxon>
        <taxon>Streptococcus</taxon>
    </lineage>
</organism>
<protein>
    <recommendedName>
        <fullName evidence="1">Phosphate acyltransferase</fullName>
        <ecNumber evidence="1">2.3.1.274</ecNumber>
    </recommendedName>
    <alternativeName>
        <fullName evidence="1">Acyl-ACP phosphotransacylase</fullName>
    </alternativeName>
    <alternativeName>
        <fullName evidence="1">Acyl-[acyl-carrier-protein]--phosphate acyltransferase</fullName>
    </alternativeName>
    <alternativeName>
        <fullName evidence="1">Phosphate-acyl-ACP acyltransferase</fullName>
    </alternativeName>
</protein>
<gene>
    <name evidence="1" type="primary">plsX</name>
    <name type="ordered locus">gbs0021</name>
</gene>
<comment type="function">
    <text evidence="1">Catalyzes the reversible formation of acyl-phosphate (acyl-PO(4)) from acyl-[acyl-carrier-protein] (acyl-ACP). This enzyme utilizes acyl-ACP as fatty acyl donor, but not acyl-CoA.</text>
</comment>
<comment type="catalytic activity">
    <reaction evidence="1">
        <text>a fatty acyl-[ACP] + phosphate = an acyl phosphate + holo-[ACP]</text>
        <dbReference type="Rhea" id="RHEA:42292"/>
        <dbReference type="Rhea" id="RHEA-COMP:9685"/>
        <dbReference type="Rhea" id="RHEA-COMP:14125"/>
        <dbReference type="ChEBI" id="CHEBI:43474"/>
        <dbReference type="ChEBI" id="CHEBI:59918"/>
        <dbReference type="ChEBI" id="CHEBI:64479"/>
        <dbReference type="ChEBI" id="CHEBI:138651"/>
        <dbReference type="EC" id="2.3.1.274"/>
    </reaction>
</comment>
<comment type="pathway">
    <text evidence="1">Lipid metabolism; phospholipid metabolism.</text>
</comment>
<comment type="subunit">
    <text evidence="1">Homodimer. Probably interacts with PlsY.</text>
</comment>
<comment type="subcellular location">
    <subcellularLocation>
        <location evidence="1">Cytoplasm</location>
    </subcellularLocation>
    <text evidence="1">Associated with the membrane possibly through PlsY.</text>
</comment>
<comment type="similarity">
    <text evidence="1">Belongs to the PlsX family.</text>
</comment>
<reference key="1">
    <citation type="journal article" date="2002" name="Mol. Microbiol.">
        <title>Genome sequence of Streptococcus agalactiae, a pathogen causing invasive neonatal disease.</title>
        <authorList>
            <person name="Glaser P."/>
            <person name="Rusniok C."/>
            <person name="Buchrieser C."/>
            <person name="Chevalier F."/>
            <person name="Frangeul L."/>
            <person name="Msadek T."/>
            <person name="Zouine M."/>
            <person name="Couve E."/>
            <person name="Lalioui L."/>
            <person name="Poyart C."/>
            <person name="Trieu-Cuot P."/>
            <person name="Kunst F."/>
        </authorList>
    </citation>
    <scope>NUCLEOTIDE SEQUENCE [LARGE SCALE GENOMIC DNA]</scope>
    <source>
        <strain>NEM316</strain>
    </source>
</reference>
<accession>P65740</accession>
<accession>Q8E2G6</accession>
<accession>Q8E7X4</accession>
<proteinExistence type="inferred from homology"/>
<keyword id="KW-0963">Cytoplasm</keyword>
<keyword id="KW-0444">Lipid biosynthesis</keyword>
<keyword id="KW-0443">Lipid metabolism</keyword>
<keyword id="KW-0594">Phospholipid biosynthesis</keyword>
<keyword id="KW-1208">Phospholipid metabolism</keyword>
<keyword id="KW-0808">Transferase</keyword>
<dbReference type="EC" id="2.3.1.274" evidence="1"/>
<dbReference type="EMBL" id="AL766843">
    <property type="protein sequence ID" value="CAD45666.1"/>
    <property type="molecule type" value="Genomic_DNA"/>
</dbReference>
<dbReference type="RefSeq" id="WP_000716823.1">
    <property type="nucleotide sequence ID" value="NC_004368.1"/>
</dbReference>
<dbReference type="SMR" id="P65740"/>
<dbReference type="KEGG" id="san:gbs0021"/>
<dbReference type="eggNOG" id="COG0416">
    <property type="taxonomic scope" value="Bacteria"/>
</dbReference>
<dbReference type="HOGENOM" id="CLU_039379_1_1_9"/>
<dbReference type="UniPathway" id="UPA00085"/>
<dbReference type="Proteomes" id="UP000000823">
    <property type="component" value="Chromosome"/>
</dbReference>
<dbReference type="GO" id="GO:0005737">
    <property type="term" value="C:cytoplasm"/>
    <property type="evidence" value="ECO:0007669"/>
    <property type="project" value="UniProtKB-SubCell"/>
</dbReference>
<dbReference type="GO" id="GO:0043811">
    <property type="term" value="F:phosphate:acyl-[acyl carrier protein] acyltransferase activity"/>
    <property type="evidence" value="ECO:0007669"/>
    <property type="project" value="UniProtKB-UniRule"/>
</dbReference>
<dbReference type="GO" id="GO:0006633">
    <property type="term" value="P:fatty acid biosynthetic process"/>
    <property type="evidence" value="ECO:0007669"/>
    <property type="project" value="UniProtKB-UniRule"/>
</dbReference>
<dbReference type="GO" id="GO:0008654">
    <property type="term" value="P:phospholipid biosynthetic process"/>
    <property type="evidence" value="ECO:0007669"/>
    <property type="project" value="UniProtKB-KW"/>
</dbReference>
<dbReference type="Gene3D" id="3.40.718.10">
    <property type="entry name" value="Isopropylmalate Dehydrogenase"/>
    <property type="match status" value="1"/>
</dbReference>
<dbReference type="HAMAP" id="MF_00019">
    <property type="entry name" value="PlsX"/>
    <property type="match status" value="1"/>
</dbReference>
<dbReference type="InterPro" id="IPR003664">
    <property type="entry name" value="FA_synthesis"/>
</dbReference>
<dbReference type="InterPro" id="IPR012281">
    <property type="entry name" value="Phospholipid_synth_PlsX-like"/>
</dbReference>
<dbReference type="NCBIfam" id="TIGR00182">
    <property type="entry name" value="plsX"/>
    <property type="match status" value="1"/>
</dbReference>
<dbReference type="PANTHER" id="PTHR30100">
    <property type="entry name" value="FATTY ACID/PHOSPHOLIPID SYNTHESIS PROTEIN PLSX"/>
    <property type="match status" value="1"/>
</dbReference>
<dbReference type="PANTHER" id="PTHR30100:SF1">
    <property type="entry name" value="PHOSPHATE ACYLTRANSFERASE"/>
    <property type="match status" value="1"/>
</dbReference>
<dbReference type="Pfam" id="PF02504">
    <property type="entry name" value="FA_synthesis"/>
    <property type="match status" value="1"/>
</dbReference>
<dbReference type="PIRSF" id="PIRSF002465">
    <property type="entry name" value="Phsphlp_syn_PlsX"/>
    <property type="match status" value="1"/>
</dbReference>
<dbReference type="SUPFAM" id="SSF53659">
    <property type="entry name" value="Isocitrate/Isopropylmalate dehydrogenase-like"/>
    <property type="match status" value="1"/>
</dbReference>
<sequence length="330" mass="35073">MKKIAIDAMGGDYAPKAIVEGVNQAISDFSDIEVQLYGDQKKIEKYLTVTERVSIIHTEEKINSDDEPAKAVRRKKQSSMVLGAKAVKDGVAQAFISAGNTGALLAAGLFVVGRIKGVDRPGLMSTMPTLDGVGFDMLDLGANAENTASHLHQYAILGSFYAKNVRGIEVPRVGLLNNGTEETKGDSLHKEAYELLAAEPSINFIGNIEARDLMSSVADVVVTDGFTGNAVLKTMEGTAMSIMGSLKSSIKSGGVKAKLGALLLKDSLYQLKDSMDYSSAGGAVLFGLKAPIVKCHGSSDSKAVYSTLKQVRTMLETQVVDQLVDAFTDE</sequence>
<feature type="chain" id="PRO_0000189943" description="Phosphate acyltransferase">
    <location>
        <begin position="1"/>
        <end position="330"/>
    </location>
</feature>
<evidence type="ECO:0000255" key="1">
    <source>
        <dbReference type="HAMAP-Rule" id="MF_00019"/>
    </source>
</evidence>
<name>PLSX_STRA3</name>